<sequence>MWIKELELKHYRNYDHLLASFSSGLNVFIGNNAQGKTNFLEAIYFLSLTRSHRTRADKELIHFDHSTVSLTGKIQRISGTVDLEINLSDKGRVTKINALKQAKLSDYIGTMMVVLFAPEDLQLVKGAPSLRRKFIDIDLGQIKPVYLSELSHYNHVLKQRNSYLKSAQQIDAAFLAVLDEQLASYGARVMEHRIDFINALEKEANTHHQAISNGLESLSLSYQSSVVFDKKTNIYQQFLYQLEKNHQKDFFRKNTSVGPHRDELAFYINGMNANFASQGQHRSLILSLKMAEVSLMKALTGDNPILLLDDVMSELDNTRQTKLLETVIKENVQTFITTTSLDHLSQLPEGIRIFHVTKGTVQIDSDIH</sequence>
<protein>
    <recommendedName>
        <fullName evidence="1">DNA replication and repair protein RecF</fullName>
    </recommendedName>
</protein>
<comment type="function">
    <text evidence="1">The RecF protein is involved in DNA metabolism; it is required for DNA replication and normal SOS inducibility. RecF binds preferentially to single-stranded, linear DNA. It also seems to bind ATP.</text>
</comment>
<comment type="subcellular location">
    <subcellularLocation>
        <location evidence="1">Cytoplasm</location>
    </subcellularLocation>
</comment>
<comment type="similarity">
    <text evidence="1">Belongs to the RecF family.</text>
</comment>
<organism>
    <name type="scientific">Streptococcus pyogenes serotype M12 (strain MGAS9429)</name>
    <dbReference type="NCBI Taxonomy" id="370551"/>
    <lineage>
        <taxon>Bacteria</taxon>
        <taxon>Bacillati</taxon>
        <taxon>Bacillota</taxon>
        <taxon>Bacilli</taxon>
        <taxon>Lactobacillales</taxon>
        <taxon>Streptococcaceae</taxon>
        <taxon>Streptococcus</taxon>
    </lineage>
</organism>
<dbReference type="EMBL" id="CP000259">
    <property type="protein sequence ID" value="ABF33053.1"/>
    <property type="molecule type" value="Genomic_DNA"/>
</dbReference>
<dbReference type="RefSeq" id="WP_011527822.1">
    <property type="nucleotide sequence ID" value="NC_008021.1"/>
</dbReference>
<dbReference type="SMR" id="Q1JJC0"/>
<dbReference type="KEGG" id="spk:MGAS9429_Spy1866"/>
<dbReference type="HOGENOM" id="CLU_040267_0_1_9"/>
<dbReference type="Proteomes" id="UP000002433">
    <property type="component" value="Chromosome"/>
</dbReference>
<dbReference type="GO" id="GO:0005737">
    <property type="term" value="C:cytoplasm"/>
    <property type="evidence" value="ECO:0007669"/>
    <property type="project" value="UniProtKB-SubCell"/>
</dbReference>
<dbReference type="GO" id="GO:0005524">
    <property type="term" value="F:ATP binding"/>
    <property type="evidence" value="ECO:0007669"/>
    <property type="project" value="UniProtKB-UniRule"/>
</dbReference>
<dbReference type="GO" id="GO:0003697">
    <property type="term" value="F:single-stranded DNA binding"/>
    <property type="evidence" value="ECO:0007669"/>
    <property type="project" value="UniProtKB-UniRule"/>
</dbReference>
<dbReference type="GO" id="GO:0006260">
    <property type="term" value="P:DNA replication"/>
    <property type="evidence" value="ECO:0007669"/>
    <property type="project" value="UniProtKB-UniRule"/>
</dbReference>
<dbReference type="GO" id="GO:0000731">
    <property type="term" value="P:DNA synthesis involved in DNA repair"/>
    <property type="evidence" value="ECO:0007669"/>
    <property type="project" value="TreeGrafter"/>
</dbReference>
<dbReference type="GO" id="GO:0006302">
    <property type="term" value="P:double-strand break repair"/>
    <property type="evidence" value="ECO:0007669"/>
    <property type="project" value="TreeGrafter"/>
</dbReference>
<dbReference type="GO" id="GO:0009432">
    <property type="term" value="P:SOS response"/>
    <property type="evidence" value="ECO:0007669"/>
    <property type="project" value="UniProtKB-UniRule"/>
</dbReference>
<dbReference type="CDD" id="cd03242">
    <property type="entry name" value="ABC_RecF"/>
    <property type="match status" value="1"/>
</dbReference>
<dbReference type="Gene3D" id="3.40.50.300">
    <property type="entry name" value="P-loop containing nucleotide triphosphate hydrolases"/>
    <property type="match status" value="1"/>
</dbReference>
<dbReference type="Gene3D" id="1.20.1050.90">
    <property type="entry name" value="RecF/RecN/SMC, N-terminal domain"/>
    <property type="match status" value="1"/>
</dbReference>
<dbReference type="HAMAP" id="MF_00365">
    <property type="entry name" value="RecF"/>
    <property type="match status" value="1"/>
</dbReference>
<dbReference type="InterPro" id="IPR001238">
    <property type="entry name" value="DNA-binding_RecF"/>
</dbReference>
<dbReference type="InterPro" id="IPR018078">
    <property type="entry name" value="DNA-binding_RecF_CS"/>
</dbReference>
<dbReference type="InterPro" id="IPR027417">
    <property type="entry name" value="P-loop_NTPase"/>
</dbReference>
<dbReference type="InterPro" id="IPR003395">
    <property type="entry name" value="RecF/RecN/SMC_N"/>
</dbReference>
<dbReference type="InterPro" id="IPR042174">
    <property type="entry name" value="RecF_2"/>
</dbReference>
<dbReference type="NCBIfam" id="TIGR00611">
    <property type="entry name" value="recf"/>
    <property type="match status" value="1"/>
</dbReference>
<dbReference type="PANTHER" id="PTHR32182">
    <property type="entry name" value="DNA REPLICATION AND REPAIR PROTEIN RECF"/>
    <property type="match status" value="1"/>
</dbReference>
<dbReference type="PANTHER" id="PTHR32182:SF0">
    <property type="entry name" value="DNA REPLICATION AND REPAIR PROTEIN RECF"/>
    <property type="match status" value="1"/>
</dbReference>
<dbReference type="Pfam" id="PF02463">
    <property type="entry name" value="SMC_N"/>
    <property type="match status" value="1"/>
</dbReference>
<dbReference type="SUPFAM" id="SSF52540">
    <property type="entry name" value="P-loop containing nucleoside triphosphate hydrolases"/>
    <property type="match status" value="1"/>
</dbReference>
<dbReference type="PROSITE" id="PS00617">
    <property type="entry name" value="RECF_1"/>
    <property type="match status" value="1"/>
</dbReference>
<dbReference type="PROSITE" id="PS00618">
    <property type="entry name" value="RECF_2"/>
    <property type="match status" value="1"/>
</dbReference>
<evidence type="ECO:0000255" key="1">
    <source>
        <dbReference type="HAMAP-Rule" id="MF_00365"/>
    </source>
</evidence>
<gene>
    <name evidence="1" type="primary">recF</name>
    <name type="ordered locus">MGAS9429_Spy1866</name>
</gene>
<keyword id="KW-0067">ATP-binding</keyword>
<keyword id="KW-0963">Cytoplasm</keyword>
<keyword id="KW-0227">DNA damage</keyword>
<keyword id="KW-0234">DNA repair</keyword>
<keyword id="KW-0235">DNA replication</keyword>
<keyword id="KW-0238">DNA-binding</keyword>
<keyword id="KW-0547">Nucleotide-binding</keyword>
<keyword id="KW-0742">SOS response</keyword>
<name>RECF_STRPC</name>
<proteinExistence type="inferred from homology"/>
<reference key="1">
    <citation type="journal article" date="2006" name="Proc. Natl. Acad. Sci. U.S.A.">
        <title>Molecular genetic anatomy of inter- and intraserotype variation in the human bacterial pathogen group A Streptococcus.</title>
        <authorList>
            <person name="Beres S.B."/>
            <person name="Richter E.W."/>
            <person name="Nagiec M.J."/>
            <person name="Sumby P."/>
            <person name="Porcella S.F."/>
            <person name="DeLeo F.R."/>
            <person name="Musser J.M."/>
        </authorList>
    </citation>
    <scope>NUCLEOTIDE SEQUENCE [LARGE SCALE GENOMIC DNA]</scope>
    <source>
        <strain>MGAS9429</strain>
    </source>
</reference>
<accession>Q1JJC0</accession>
<feature type="chain" id="PRO_1000048585" description="DNA replication and repair protein RecF">
    <location>
        <begin position="1"/>
        <end position="368"/>
    </location>
</feature>
<feature type="binding site" evidence="1">
    <location>
        <begin position="30"/>
        <end position="37"/>
    </location>
    <ligand>
        <name>ATP</name>
        <dbReference type="ChEBI" id="CHEBI:30616"/>
    </ligand>
</feature>